<organism>
    <name type="scientific">Aliivibrio fischeri (strain ATCC 700601 / ES114)</name>
    <name type="common">Vibrio fischeri</name>
    <dbReference type="NCBI Taxonomy" id="312309"/>
    <lineage>
        <taxon>Bacteria</taxon>
        <taxon>Pseudomonadati</taxon>
        <taxon>Pseudomonadota</taxon>
        <taxon>Gammaproteobacteria</taxon>
        <taxon>Vibrionales</taxon>
        <taxon>Vibrionaceae</taxon>
        <taxon>Aliivibrio</taxon>
    </lineage>
</organism>
<keyword id="KW-1185">Reference proteome</keyword>
<keyword id="KW-0687">Ribonucleoprotein</keyword>
<keyword id="KW-0689">Ribosomal protein</keyword>
<dbReference type="EMBL" id="CP000020">
    <property type="protein sequence ID" value="AAW84753.1"/>
    <property type="molecule type" value="Genomic_DNA"/>
</dbReference>
<dbReference type="RefSeq" id="WP_005417265.1">
    <property type="nucleotide sequence ID" value="NZ_CAWLES010000001.1"/>
</dbReference>
<dbReference type="RefSeq" id="YP_203641.1">
    <property type="nucleotide sequence ID" value="NC_006840.2"/>
</dbReference>
<dbReference type="SMR" id="Q5E893"/>
<dbReference type="STRING" id="312309.VF_0258"/>
<dbReference type="EnsemblBacteria" id="AAW84753">
    <property type="protein sequence ID" value="AAW84753"/>
    <property type="gene ID" value="VF_0258"/>
</dbReference>
<dbReference type="GeneID" id="56276434"/>
<dbReference type="KEGG" id="vfi:VF_0258"/>
<dbReference type="PATRIC" id="fig|312309.11.peg.253"/>
<dbReference type="eggNOG" id="COG0257">
    <property type="taxonomic scope" value="Bacteria"/>
</dbReference>
<dbReference type="HOGENOM" id="CLU_135723_6_2_6"/>
<dbReference type="OrthoDB" id="9802520at2"/>
<dbReference type="Proteomes" id="UP000000537">
    <property type="component" value="Chromosome I"/>
</dbReference>
<dbReference type="GO" id="GO:0005737">
    <property type="term" value="C:cytoplasm"/>
    <property type="evidence" value="ECO:0007669"/>
    <property type="project" value="UniProtKB-ARBA"/>
</dbReference>
<dbReference type="GO" id="GO:1990904">
    <property type="term" value="C:ribonucleoprotein complex"/>
    <property type="evidence" value="ECO:0007669"/>
    <property type="project" value="UniProtKB-KW"/>
</dbReference>
<dbReference type="GO" id="GO:0005840">
    <property type="term" value="C:ribosome"/>
    <property type="evidence" value="ECO:0007669"/>
    <property type="project" value="UniProtKB-KW"/>
</dbReference>
<dbReference type="GO" id="GO:0003735">
    <property type="term" value="F:structural constituent of ribosome"/>
    <property type="evidence" value="ECO:0007669"/>
    <property type="project" value="InterPro"/>
</dbReference>
<dbReference type="GO" id="GO:0006412">
    <property type="term" value="P:translation"/>
    <property type="evidence" value="ECO:0007669"/>
    <property type="project" value="UniProtKB-UniRule"/>
</dbReference>
<dbReference type="HAMAP" id="MF_00251">
    <property type="entry name" value="Ribosomal_bL36"/>
    <property type="match status" value="1"/>
</dbReference>
<dbReference type="InterPro" id="IPR000473">
    <property type="entry name" value="Ribosomal_bL36"/>
</dbReference>
<dbReference type="InterPro" id="IPR035977">
    <property type="entry name" value="Ribosomal_bL36_sp"/>
</dbReference>
<dbReference type="NCBIfam" id="TIGR01022">
    <property type="entry name" value="rpmJ_bact"/>
    <property type="match status" value="1"/>
</dbReference>
<dbReference type="PANTHER" id="PTHR42888">
    <property type="entry name" value="50S RIBOSOMAL PROTEIN L36, CHLOROPLASTIC"/>
    <property type="match status" value="1"/>
</dbReference>
<dbReference type="PANTHER" id="PTHR42888:SF1">
    <property type="entry name" value="LARGE RIBOSOMAL SUBUNIT PROTEIN BL36C"/>
    <property type="match status" value="1"/>
</dbReference>
<dbReference type="Pfam" id="PF00444">
    <property type="entry name" value="Ribosomal_L36"/>
    <property type="match status" value="1"/>
</dbReference>
<dbReference type="SUPFAM" id="SSF57840">
    <property type="entry name" value="Ribosomal protein L36"/>
    <property type="match status" value="1"/>
</dbReference>
<dbReference type="PROSITE" id="PS00828">
    <property type="entry name" value="RIBOSOMAL_L36"/>
    <property type="match status" value="1"/>
</dbReference>
<feature type="chain" id="PRO_0000302330" description="Large ribosomal subunit protein bL36">
    <location>
        <begin position="1"/>
        <end position="37"/>
    </location>
</feature>
<proteinExistence type="inferred from homology"/>
<reference key="1">
    <citation type="journal article" date="2005" name="Proc. Natl. Acad. Sci. U.S.A.">
        <title>Complete genome sequence of Vibrio fischeri: a symbiotic bacterium with pathogenic congeners.</title>
        <authorList>
            <person name="Ruby E.G."/>
            <person name="Urbanowski M."/>
            <person name="Campbell J."/>
            <person name="Dunn A."/>
            <person name="Faini M."/>
            <person name="Gunsalus R."/>
            <person name="Lostroh P."/>
            <person name="Lupp C."/>
            <person name="McCann J."/>
            <person name="Millikan D."/>
            <person name="Schaefer A."/>
            <person name="Stabb E."/>
            <person name="Stevens A."/>
            <person name="Visick K."/>
            <person name="Whistler C."/>
            <person name="Greenberg E.P."/>
        </authorList>
    </citation>
    <scope>NUCLEOTIDE SEQUENCE [LARGE SCALE GENOMIC DNA]</scope>
    <source>
        <strain>ATCC 700601 / ES114</strain>
    </source>
</reference>
<name>RL36_ALIF1</name>
<accession>Q5E893</accession>
<evidence type="ECO:0000255" key="1">
    <source>
        <dbReference type="HAMAP-Rule" id="MF_00251"/>
    </source>
</evidence>
<evidence type="ECO:0000305" key="2"/>
<protein>
    <recommendedName>
        <fullName evidence="1">Large ribosomal subunit protein bL36</fullName>
    </recommendedName>
    <alternativeName>
        <fullName evidence="2">50S ribosomal protein L36</fullName>
    </alternativeName>
</protein>
<comment type="similarity">
    <text evidence="1">Belongs to the bacterial ribosomal protein bL36 family.</text>
</comment>
<sequence length="37" mass="4290">MKVRASVKKICRNCKVIKRNGVVRVICVEPKHKQRQG</sequence>
<gene>
    <name evidence="1" type="primary">rpmJ</name>
    <name type="ordered locus">VF_0258</name>
</gene>